<accession>Q6YXR1</accession>
<organism>
    <name type="scientific">Physcomitrium patens</name>
    <name type="common">Spreading-leaved earth moss</name>
    <name type="synonym">Physcomitrella patens</name>
    <dbReference type="NCBI Taxonomy" id="3218"/>
    <lineage>
        <taxon>Eukaryota</taxon>
        <taxon>Viridiplantae</taxon>
        <taxon>Streptophyta</taxon>
        <taxon>Embryophyta</taxon>
        <taxon>Bryophyta</taxon>
        <taxon>Bryophytina</taxon>
        <taxon>Bryopsida</taxon>
        <taxon>Funariidae</taxon>
        <taxon>Funariales</taxon>
        <taxon>Funariaceae</taxon>
        <taxon>Physcomitrium</taxon>
    </lineage>
</organism>
<sequence>MKFYWSQIYSWLLRTPYRSLERAYRASKKIQHIKKNYIFYNKNIISSSRRSWQAIMLYINTNLNNCVFIIYWSLLEYRISLFFFDFIKTFVLIISNFFNSFFSNLISNNVIKQDLKEIKQMNKKLAWIEASLNDLDMWKYYYSFSFFSKEKQKTVETSLTFVDLKKNNVTTAAYESIGLVPRSITRTLSGFKTELTGQSTSLVLQDFQIARYQALASLQYMLFLLFIPWGFSSLLKIWFLEPWLKNWWNTYQYQIFLNSFQEELALKRLQQIEELVWLDKIMVNSLKEPQSQDLNIEIHQKTIQLVKIYNENSLNTLLHLLTDIVYVITLSAVFILGKQRLAILNSWIQELFYSLSDTMKAFSILLLTDLCIGFHSPHGWEIVIGSFLEHLGFAHNKHIISCFVSTFPVILDTVFKYWIFRHLNRISPSIVATYHTMNE</sequence>
<keyword id="KW-0050">Antiport</keyword>
<keyword id="KW-0150">Chloroplast</keyword>
<keyword id="KW-0375">Hydrogen ion transport</keyword>
<keyword id="KW-0406">Ion transport</keyword>
<keyword id="KW-0472">Membrane</keyword>
<keyword id="KW-0934">Plastid</keyword>
<keyword id="KW-1001">Plastid inner membrane</keyword>
<keyword id="KW-0630">Potassium</keyword>
<keyword id="KW-0633">Potassium transport</keyword>
<keyword id="KW-1185">Reference proteome</keyword>
<keyword id="KW-0812">Transmembrane</keyword>
<keyword id="KW-1133">Transmembrane helix</keyword>
<keyword id="KW-0813">Transport</keyword>
<protein>
    <recommendedName>
        <fullName evidence="1">Potassium/proton antiporter CemA</fullName>
    </recommendedName>
    <alternativeName>
        <fullName evidence="1">Chloroplast envelope membrane protein A</fullName>
        <shortName evidence="1">CemA</shortName>
    </alternativeName>
</protein>
<comment type="function">
    <text evidence="1">Contributes to K(+)/H(+) antiport activity by supporting proton efflux to control proton extrusion and homeostasis in chloroplasts in a light-dependent manner to modulate photosynthesis. Prevents excessive induction of non-photochemical quenching (NPQ) under continuous-light conditions. Indirectly promotes efficient inorganic carbon uptake into chloroplasts.</text>
</comment>
<comment type="catalytic activity">
    <reaction evidence="1">
        <text>K(+)(in) + H(+)(out) = K(+)(out) + H(+)(in)</text>
        <dbReference type="Rhea" id="RHEA:29467"/>
        <dbReference type="ChEBI" id="CHEBI:15378"/>
        <dbReference type="ChEBI" id="CHEBI:29103"/>
    </reaction>
</comment>
<comment type="subcellular location">
    <subcellularLocation>
        <location evidence="1">Plastid</location>
        <location evidence="1">Chloroplast inner membrane</location>
        <topology evidence="1">Multi-pass membrane protein</topology>
    </subcellularLocation>
</comment>
<comment type="similarity">
    <text evidence="1 2">Belongs to the CemA family.</text>
</comment>
<name>CEMA_PHYPA</name>
<reference key="1">
    <citation type="journal article" date="2003" name="Nucleic Acids Res.">
        <title>Complete chloroplast DNA sequence of the moss Physcomitrella patens: evidence for the loss and relocation of rpoA from the chloroplast to the nucleus.</title>
        <authorList>
            <person name="Sugiura C."/>
            <person name="Kobayashi Y."/>
            <person name="Setsuyuki A."/>
            <person name="Sugita C."/>
            <person name="Sugita M."/>
        </authorList>
    </citation>
    <scope>NUCLEOTIDE SEQUENCE [LARGE SCALE GENOMIC DNA]</scope>
    <source>
        <strain>cv. Gransden 2004</strain>
    </source>
</reference>
<geneLocation type="chloroplast"/>
<gene>
    <name evidence="1" type="primary">cemA</name>
</gene>
<dbReference type="EMBL" id="AP005672">
    <property type="protein sequence ID" value="BAC85040.1"/>
    <property type="molecule type" value="Genomic_DNA"/>
</dbReference>
<dbReference type="RefSeq" id="YP_009477520.1">
    <property type="nucleotide sequence ID" value="NC_037465.1"/>
</dbReference>
<dbReference type="FunCoup" id="Q6YXR1">
    <property type="interactions" value="44"/>
</dbReference>
<dbReference type="STRING" id="3218.Q6YXR1"/>
<dbReference type="GeneID" id="36487134"/>
<dbReference type="KEGG" id="ppp:2546724"/>
<dbReference type="InParanoid" id="Q6YXR1"/>
<dbReference type="OrthoDB" id="993at2759"/>
<dbReference type="Proteomes" id="UP000006727">
    <property type="component" value="Chloroplast"/>
</dbReference>
<dbReference type="GO" id="GO:0009706">
    <property type="term" value="C:chloroplast inner membrane"/>
    <property type="evidence" value="ECO:0007669"/>
    <property type="project" value="UniProtKB-SubCell"/>
</dbReference>
<dbReference type="GO" id="GO:0015297">
    <property type="term" value="F:antiporter activity"/>
    <property type="evidence" value="ECO:0007669"/>
    <property type="project" value="UniProtKB-KW"/>
</dbReference>
<dbReference type="GO" id="GO:0015078">
    <property type="term" value="F:proton transmembrane transporter activity"/>
    <property type="evidence" value="ECO:0007669"/>
    <property type="project" value="UniProtKB-UniRule"/>
</dbReference>
<dbReference type="GO" id="GO:0006813">
    <property type="term" value="P:potassium ion transport"/>
    <property type="evidence" value="ECO:0007669"/>
    <property type="project" value="UniProtKB-UniRule"/>
</dbReference>
<dbReference type="HAMAP" id="MF_01308">
    <property type="entry name" value="CemA_PxcA"/>
    <property type="match status" value="1"/>
</dbReference>
<dbReference type="InterPro" id="IPR004282">
    <property type="entry name" value="CemA"/>
</dbReference>
<dbReference type="PANTHER" id="PTHR33650:SF2">
    <property type="entry name" value="CHLOROPLAST ENVELOPE MEMBRANE PROTEIN"/>
    <property type="match status" value="1"/>
</dbReference>
<dbReference type="PANTHER" id="PTHR33650">
    <property type="entry name" value="CHLOROPLAST ENVELOPE MEMBRANE PROTEIN-RELATED"/>
    <property type="match status" value="1"/>
</dbReference>
<dbReference type="Pfam" id="PF03040">
    <property type="entry name" value="CemA"/>
    <property type="match status" value="1"/>
</dbReference>
<evidence type="ECO:0000255" key="1">
    <source>
        <dbReference type="HAMAP-Rule" id="MF_01308"/>
    </source>
</evidence>
<evidence type="ECO:0000305" key="2"/>
<feature type="chain" id="PRO_0000216656" description="Potassium/proton antiporter CemA">
    <location>
        <begin position="1"/>
        <end position="439"/>
    </location>
</feature>
<feature type="transmembrane region" description="Helical" evidence="1">
    <location>
        <begin position="55"/>
        <end position="75"/>
    </location>
</feature>
<feature type="transmembrane region" description="Helical" evidence="1">
    <location>
        <begin position="79"/>
        <end position="99"/>
    </location>
</feature>
<feature type="transmembrane region" description="Helical" evidence="1">
    <location>
        <begin position="220"/>
        <end position="240"/>
    </location>
</feature>
<feature type="transmembrane region" description="Helical" evidence="1">
    <location>
        <begin position="317"/>
        <end position="337"/>
    </location>
</feature>
<feature type="transmembrane region" description="Helical" evidence="1">
    <location>
        <begin position="364"/>
        <end position="384"/>
    </location>
</feature>
<feature type="transmembrane region" description="Helical" evidence="1">
    <location>
        <begin position="399"/>
        <end position="419"/>
    </location>
</feature>
<proteinExistence type="inferred from homology"/>